<reference key="1">
    <citation type="journal article" date="2001" name="Nature">
        <title>Genome sequence of enterohaemorrhagic Escherichia coli O157:H7.</title>
        <authorList>
            <person name="Perna N.T."/>
            <person name="Plunkett G. III"/>
            <person name="Burland V."/>
            <person name="Mau B."/>
            <person name="Glasner J.D."/>
            <person name="Rose D.J."/>
            <person name="Mayhew G.F."/>
            <person name="Evans P.S."/>
            <person name="Gregor J."/>
            <person name="Kirkpatrick H.A."/>
            <person name="Posfai G."/>
            <person name="Hackett J."/>
            <person name="Klink S."/>
            <person name="Boutin A."/>
            <person name="Shao Y."/>
            <person name="Miller L."/>
            <person name="Grotbeck E.J."/>
            <person name="Davis N.W."/>
            <person name="Lim A."/>
            <person name="Dimalanta E.T."/>
            <person name="Potamousis K."/>
            <person name="Apodaca J."/>
            <person name="Anantharaman T.S."/>
            <person name="Lin J."/>
            <person name="Yen G."/>
            <person name="Schwartz D.C."/>
            <person name="Welch R.A."/>
            <person name="Blattner F.R."/>
        </authorList>
    </citation>
    <scope>NUCLEOTIDE SEQUENCE [LARGE SCALE GENOMIC DNA]</scope>
    <source>
        <strain>O157:H7 / EDL933 / ATCC 700927 / EHEC</strain>
    </source>
</reference>
<reference key="2">
    <citation type="journal article" date="2001" name="DNA Res.">
        <title>Complete genome sequence of enterohemorrhagic Escherichia coli O157:H7 and genomic comparison with a laboratory strain K-12.</title>
        <authorList>
            <person name="Hayashi T."/>
            <person name="Makino K."/>
            <person name="Ohnishi M."/>
            <person name="Kurokawa K."/>
            <person name="Ishii K."/>
            <person name="Yokoyama K."/>
            <person name="Han C.-G."/>
            <person name="Ohtsubo E."/>
            <person name="Nakayama K."/>
            <person name="Murata T."/>
            <person name="Tanaka M."/>
            <person name="Tobe T."/>
            <person name="Iida T."/>
            <person name="Takami H."/>
            <person name="Honda T."/>
            <person name="Sasakawa C."/>
            <person name="Ogasawara N."/>
            <person name="Yasunaga T."/>
            <person name="Kuhara S."/>
            <person name="Shiba T."/>
            <person name="Hattori M."/>
            <person name="Shinagawa H."/>
        </authorList>
    </citation>
    <scope>NUCLEOTIDE SEQUENCE [LARGE SCALE GENOMIC DNA]</scope>
    <source>
        <strain>O157:H7 / Sakai / RIMD 0509952 / EHEC</strain>
    </source>
</reference>
<evidence type="ECO:0000255" key="1">
    <source>
        <dbReference type="HAMAP-Rule" id="MF_01361"/>
    </source>
</evidence>
<evidence type="ECO:0000305" key="2"/>
<sequence length="53" mass="5536">MFRWGIIFLVIALIAAALGFGGLAGTAAGAAKIVFVVGIILFLVSLFMGRKRP</sequence>
<accession>Q8X479</accession>
<protein>
    <recommendedName>
        <fullName evidence="1">UPF0391 membrane protein YtjA</fullName>
    </recommendedName>
</protein>
<keyword id="KW-1003">Cell membrane</keyword>
<keyword id="KW-0472">Membrane</keyword>
<keyword id="KW-1185">Reference proteome</keyword>
<keyword id="KW-0812">Transmembrane</keyword>
<keyword id="KW-1133">Transmembrane helix</keyword>
<organism>
    <name type="scientific">Escherichia coli O157:H7</name>
    <dbReference type="NCBI Taxonomy" id="83334"/>
    <lineage>
        <taxon>Bacteria</taxon>
        <taxon>Pseudomonadati</taxon>
        <taxon>Pseudomonadota</taxon>
        <taxon>Gammaproteobacteria</taxon>
        <taxon>Enterobacterales</taxon>
        <taxon>Enterobacteriaceae</taxon>
        <taxon>Escherichia</taxon>
    </lineage>
</organism>
<feature type="chain" id="PRO_0000256735" description="UPF0391 membrane protein YtjA">
    <location>
        <begin position="1"/>
        <end position="53"/>
    </location>
</feature>
<feature type="transmembrane region" description="Helical" evidence="1">
    <location>
        <begin position="4"/>
        <end position="24"/>
    </location>
</feature>
<feature type="transmembrane region" description="Helical" evidence="1">
    <location>
        <begin position="30"/>
        <end position="48"/>
    </location>
</feature>
<dbReference type="EMBL" id="AE005174">
    <property type="protein sequence ID" value="AAG59557.1"/>
    <property type="status" value="ALT_INIT"/>
    <property type="molecule type" value="Genomic_DNA"/>
</dbReference>
<dbReference type="EMBL" id="BA000007">
    <property type="status" value="NOT_ANNOTATED_CDS"/>
    <property type="molecule type" value="Genomic_DNA"/>
</dbReference>
<dbReference type="PIR" id="A86137">
    <property type="entry name" value="A86137"/>
</dbReference>
<dbReference type="RefSeq" id="WP_000490275.1">
    <property type="nucleotide sequence ID" value="NZ_VOAI01000002.1"/>
</dbReference>
<dbReference type="STRING" id="155864.Z5978"/>
<dbReference type="KEGG" id="ece:Z5978"/>
<dbReference type="PATRIC" id="fig|83334.175.peg.106"/>
<dbReference type="eggNOG" id="COG5487">
    <property type="taxonomic scope" value="Bacteria"/>
</dbReference>
<dbReference type="OMA" id="LRWTVIF"/>
<dbReference type="Proteomes" id="UP000000558">
    <property type="component" value="Chromosome"/>
</dbReference>
<dbReference type="Proteomes" id="UP000002519">
    <property type="component" value="Chromosome"/>
</dbReference>
<dbReference type="GO" id="GO:0005886">
    <property type="term" value="C:plasma membrane"/>
    <property type="evidence" value="ECO:0007669"/>
    <property type="project" value="UniProtKB-SubCell"/>
</dbReference>
<dbReference type="HAMAP" id="MF_01361">
    <property type="entry name" value="UPF0391"/>
    <property type="match status" value="1"/>
</dbReference>
<dbReference type="InterPro" id="IPR009760">
    <property type="entry name" value="DUF1328"/>
</dbReference>
<dbReference type="NCBIfam" id="NF010229">
    <property type="entry name" value="PRK13682.1-4"/>
    <property type="match status" value="1"/>
</dbReference>
<dbReference type="NCBIfam" id="NF010230">
    <property type="entry name" value="PRK13682.1-5"/>
    <property type="match status" value="1"/>
</dbReference>
<dbReference type="Pfam" id="PF07043">
    <property type="entry name" value="DUF1328"/>
    <property type="match status" value="1"/>
</dbReference>
<dbReference type="PIRSF" id="PIRSF036466">
    <property type="entry name" value="UCP036466"/>
    <property type="match status" value="1"/>
</dbReference>
<proteinExistence type="inferred from homology"/>
<name>YTJA_ECO57</name>
<comment type="subcellular location">
    <subcellularLocation>
        <location evidence="1">Cell membrane</location>
        <topology evidence="1">Multi-pass membrane protein</topology>
    </subcellularLocation>
</comment>
<comment type="similarity">
    <text evidence="1">Belongs to the UPF0391 family.</text>
</comment>
<comment type="sequence caution" evidence="2">
    <conflict type="erroneous initiation">
        <sequence resource="EMBL-CDS" id="AAG59557"/>
    </conflict>
</comment>
<gene>
    <name evidence="1" type="primary">ytjA</name>
    <name type="ordered locus">Z5978</name>
    <name type="ordered locus">ECs5334.1</name>
</gene>